<reference key="1">
    <citation type="journal article" date="2002" name="FEMS Microbiol. Lett.">
        <title>Interaction of NahR, a LysR-type transcriptional regulator, with the alpha subunit of RNA polymerase in the naphthalene degrading bacterium, Pseudomonas putida NCIB 9816-4.</title>
        <authorList>
            <person name="Park W."/>
            <person name="Jeon C.O."/>
            <person name="Madsen E.L."/>
        </authorList>
    </citation>
    <scope>NUCLEOTIDE SEQUENCE [GENOMIC DNA]</scope>
    <source>
        <strain>NCIMB 9816-4</strain>
    </source>
</reference>
<organism>
    <name type="scientific">Pseudomonas putida</name>
    <name type="common">Arthrobacter siderocapsulatus</name>
    <dbReference type="NCBI Taxonomy" id="303"/>
    <lineage>
        <taxon>Bacteria</taxon>
        <taxon>Pseudomonadati</taxon>
        <taxon>Pseudomonadota</taxon>
        <taxon>Gammaproteobacteria</taxon>
        <taxon>Pseudomonadales</taxon>
        <taxon>Pseudomonadaceae</taxon>
        <taxon>Pseudomonas</taxon>
    </lineage>
</organism>
<name>RPOA_PSEPU</name>
<proteinExistence type="inferred from homology"/>
<comment type="function">
    <text evidence="1">DNA-dependent RNA polymerase catalyzes the transcription of DNA into RNA using the four ribonucleoside triphosphates as substrates.</text>
</comment>
<comment type="catalytic activity">
    <reaction evidence="1">
        <text>RNA(n) + a ribonucleoside 5'-triphosphate = RNA(n+1) + diphosphate</text>
        <dbReference type="Rhea" id="RHEA:21248"/>
        <dbReference type="Rhea" id="RHEA-COMP:14527"/>
        <dbReference type="Rhea" id="RHEA-COMP:17342"/>
        <dbReference type="ChEBI" id="CHEBI:33019"/>
        <dbReference type="ChEBI" id="CHEBI:61557"/>
        <dbReference type="ChEBI" id="CHEBI:140395"/>
        <dbReference type="EC" id="2.7.7.6"/>
    </reaction>
</comment>
<comment type="subunit">
    <text evidence="1">Homodimer. The RNAP catalytic core consists of 2 alpha, 1 beta, 1 beta' and 1 omega subunit. When a sigma factor is associated with the core the holoenzyme is formed, which can initiate transcription.</text>
</comment>
<comment type="domain">
    <text evidence="1">The N-terminal domain is essential for RNAP assembly and basal transcription, whereas the C-terminal domain is involved in interaction with transcriptional regulators and with upstream promoter elements.</text>
</comment>
<comment type="similarity">
    <text evidence="1">Belongs to the RNA polymerase alpha chain family.</text>
</comment>
<sequence>MQSSVNEFLTPRHIDVQVVSPTRAKITLEPLERGFGHTLGNALRRILLSSMPGCAVVEAEIDGVLHEYSAIEGVQEDVIEILLNLKGLAIKLHGRDEVTLTLSKKGSGVVTAADIQLDHDVEIVNPDHVIANLASNGALNMKLVVARGRGYEPADSRQSDEDESRSIGRLQLDSSFSPVRRIAYVVENARVEQRTNLDKLVIDLETNGTLDPEEAIRRAATILQQQLAAFVDLKGDSEPVVVEQEDEIDPILLRPVDDLELTVRSANCLKAENIYYIGDLIQRTEVELLKTPNLGKKSLTEIKDVLASRGLSLGMRLDNWPPASLKKDDKATA</sequence>
<accession>Q8L2F8</accession>
<keyword id="KW-0240">DNA-directed RNA polymerase</keyword>
<keyword id="KW-0548">Nucleotidyltransferase</keyword>
<keyword id="KW-0804">Transcription</keyword>
<keyword id="KW-0808">Transferase</keyword>
<protein>
    <recommendedName>
        <fullName evidence="1">DNA-directed RNA polymerase subunit alpha</fullName>
        <shortName evidence="1">RNAP subunit alpha</shortName>
        <ecNumber evidence="1">2.7.7.6</ecNumber>
    </recommendedName>
    <alternativeName>
        <fullName evidence="1">RNA polymerase subunit alpha</fullName>
    </alternativeName>
    <alternativeName>
        <fullName evidence="1">Transcriptase subunit alpha</fullName>
    </alternativeName>
</protein>
<evidence type="ECO:0000255" key="1">
    <source>
        <dbReference type="HAMAP-Rule" id="MF_00059"/>
    </source>
</evidence>
<dbReference type="EC" id="2.7.7.6" evidence="1"/>
<dbReference type="EMBL" id="AF506984">
    <property type="protein sequence ID" value="AAM33636.1"/>
    <property type="molecule type" value="Genomic_DNA"/>
</dbReference>
<dbReference type="SMR" id="Q8L2F8"/>
<dbReference type="eggNOG" id="COG0202">
    <property type="taxonomic scope" value="Bacteria"/>
</dbReference>
<dbReference type="GO" id="GO:0005737">
    <property type="term" value="C:cytoplasm"/>
    <property type="evidence" value="ECO:0007669"/>
    <property type="project" value="UniProtKB-ARBA"/>
</dbReference>
<dbReference type="GO" id="GO:0000428">
    <property type="term" value="C:DNA-directed RNA polymerase complex"/>
    <property type="evidence" value="ECO:0007669"/>
    <property type="project" value="UniProtKB-KW"/>
</dbReference>
<dbReference type="GO" id="GO:0003677">
    <property type="term" value="F:DNA binding"/>
    <property type="evidence" value="ECO:0007669"/>
    <property type="project" value="UniProtKB-UniRule"/>
</dbReference>
<dbReference type="GO" id="GO:0003899">
    <property type="term" value="F:DNA-directed RNA polymerase activity"/>
    <property type="evidence" value="ECO:0007669"/>
    <property type="project" value="UniProtKB-UniRule"/>
</dbReference>
<dbReference type="GO" id="GO:0046983">
    <property type="term" value="F:protein dimerization activity"/>
    <property type="evidence" value="ECO:0007669"/>
    <property type="project" value="InterPro"/>
</dbReference>
<dbReference type="GO" id="GO:0006351">
    <property type="term" value="P:DNA-templated transcription"/>
    <property type="evidence" value="ECO:0007669"/>
    <property type="project" value="UniProtKB-UniRule"/>
</dbReference>
<dbReference type="CDD" id="cd06928">
    <property type="entry name" value="RNAP_alpha_NTD"/>
    <property type="match status" value="1"/>
</dbReference>
<dbReference type="FunFam" id="1.10.150.20:FF:000001">
    <property type="entry name" value="DNA-directed RNA polymerase subunit alpha"/>
    <property type="match status" value="1"/>
</dbReference>
<dbReference type="FunFam" id="2.170.120.12:FF:000001">
    <property type="entry name" value="DNA-directed RNA polymerase subunit alpha"/>
    <property type="match status" value="1"/>
</dbReference>
<dbReference type="Gene3D" id="1.10.150.20">
    <property type="entry name" value="5' to 3' exonuclease, C-terminal subdomain"/>
    <property type="match status" value="1"/>
</dbReference>
<dbReference type="Gene3D" id="2.170.120.12">
    <property type="entry name" value="DNA-directed RNA polymerase, insert domain"/>
    <property type="match status" value="1"/>
</dbReference>
<dbReference type="Gene3D" id="3.30.1360.10">
    <property type="entry name" value="RNA polymerase, RBP11-like subunit"/>
    <property type="match status" value="1"/>
</dbReference>
<dbReference type="HAMAP" id="MF_00059">
    <property type="entry name" value="RNApol_bact_RpoA"/>
    <property type="match status" value="1"/>
</dbReference>
<dbReference type="InterPro" id="IPR011262">
    <property type="entry name" value="DNA-dir_RNA_pol_insert"/>
</dbReference>
<dbReference type="InterPro" id="IPR011263">
    <property type="entry name" value="DNA-dir_RNA_pol_RpoA/D/Rpb3"/>
</dbReference>
<dbReference type="InterPro" id="IPR011773">
    <property type="entry name" value="DNA-dir_RpoA"/>
</dbReference>
<dbReference type="InterPro" id="IPR036603">
    <property type="entry name" value="RBP11-like"/>
</dbReference>
<dbReference type="InterPro" id="IPR011260">
    <property type="entry name" value="RNAP_asu_C"/>
</dbReference>
<dbReference type="InterPro" id="IPR036643">
    <property type="entry name" value="RNApol_insert_sf"/>
</dbReference>
<dbReference type="NCBIfam" id="NF003513">
    <property type="entry name" value="PRK05182.1-2"/>
    <property type="match status" value="1"/>
</dbReference>
<dbReference type="NCBIfam" id="NF003519">
    <property type="entry name" value="PRK05182.2-5"/>
    <property type="match status" value="1"/>
</dbReference>
<dbReference type="NCBIfam" id="TIGR02027">
    <property type="entry name" value="rpoA"/>
    <property type="match status" value="1"/>
</dbReference>
<dbReference type="Pfam" id="PF01000">
    <property type="entry name" value="RNA_pol_A_bac"/>
    <property type="match status" value="1"/>
</dbReference>
<dbReference type="Pfam" id="PF03118">
    <property type="entry name" value="RNA_pol_A_CTD"/>
    <property type="match status" value="1"/>
</dbReference>
<dbReference type="Pfam" id="PF01193">
    <property type="entry name" value="RNA_pol_L"/>
    <property type="match status" value="1"/>
</dbReference>
<dbReference type="SMART" id="SM00662">
    <property type="entry name" value="RPOLD"/>
    <property type="match status" value="1"/>
</dbReference>
<dbReference type="SUPFAM" id="SSF47789">
    <property type="entry name" value="C-terminal domain of RNA polymerase alpha subunit"/>
    <property type="match status" value="1"/>
</dbReference>
<dbReference type="SUPFAM" id="SSF56553">
    <property type="entry name" value="Insert subdomain of RNA polymerase alpha subunit"/>
    <property type="match status" value="1"/>
</dbReference>
<dbReference type="SUPFAM" id="SSF55257">
    <property type="entry name" value="RBP11-like subunits of RNA polymerase"/>
    <property type="match status" value="1"/>
</dbReference>
<feature type="chain" id="PRO_0000175360" description="DNA-directed RNA polymerase subunit alpha">
    <location>
        <begin position="1"/>
        <end position="333"/>
    </location>
</feature>
<feature type="region of interest" description="Alpha N-terminal domain (alpha-NTD)" evidence="1">
    <location>
        <begin position="1"/>
        <end position="234"/>
    </location>
</feature>
<feature type="region of interest" description="Alpha C-terminal domain (alpha-CTD)" evidence="1">
    <location>
        <begin position="248"/>
        <end position="333"/>
    </location>
</feature>
<gene>
    <name evidence="1" type="primary">rpoA</name>
</gene>